<feature type="chain" id="PRO_0000209656" description="Rhamnulose-1-phosphate aldolase">
    <location>
        <begin position="1"/>
        <end position="269"/>
    </location>
</feature>
<feature type="active site" evidence="1">
    <location>
        <position position="119"/>
    </location>
</feature>
<feature type="binding site" evidence="1">
    <location>
        <position position="142"/>
    </location>
    <ligand>
        <name>Zn(2+)</name>
        <dbReference type="ChEBI" id="CHEBI:29105"/>
    </ligand>
</feature>
<feature type="binding site" evidence="1">
    <location>
        <position position="144"/>
    </location>
    <ligand>
        <name>Zn(2+)</name>
        <dbReference type="ChEBI" id="CHEBI:29105"/>
    </ligand>
</feature>
<feature type="binding site" evidence="1">
    <location>
        <position position="214"/>
    </location>
    <ligand>
        <name>Zn(2+)</name>
        <dbReference type="ChEBI" id="CHEBI:29105"/>
    </ligand>
</feature>
<accession>Q8A1A0</accession>
<protein>
    <recommendedName>
        <fullName evidence="1">Rhamnulose-1-phosphate aldolase</fullName>
        <ecNumber evidence="1">4.1.2.19</ecNumber>
    </recommendedName>
</protein>
<evidence type="ECO:0000255" key="1">
    <source>
        <dbReference type="HAMAP-Rule" id="MF_00770"/>
    </source>
</evidence>
<name>RHAD_BACTN</name>
<comment type="function">
    <text evidence="1">Catalyzes the reversible cleavage of L-rhamnulose-1-phosphate to dihydroxyacetone phosphate (DHAP) and L-lactaldehyde.</text>
</comment>
<comment type="catalytic activity">
    <reaction evidence="1">
        <text>L-rhamnulose 1-phosphate = (S)-lactaldehyde + dihydroxyacetone phosphate</text>
        <dbReference type="Rhea" id="RHEA:19689"/>
        <dbReference type="ChEBI" id="CHEBI:18041"/>
        <dbReference type="ChEBI" id="CHEBI:57642"/>
        <dbReference type="ChEBI" id="CHEBI:58313"/>
        <dbReference type="EC" id="4.1.2.19"/>
    </reaction>
</comment>
<comment type="cofactor">
    <cofactor evidence="1">
        <name>Zn(2+)</name>
        <dbReference type="ChEBI" id="CHEBI:29105"/>
    </cofactor>
    <text evidence="1">Binds 1 zinc ion per subunit.</text>
</comment>
<comment type="pathway">
    <text evidence="1">Carbohydrate degradation; L-rhamnose degradation; glycerone phosphate from L-rhamnose: step 3/3.</text>
</comment>
<comment type="subcellular location">
    <subcellularLocation>
        <location evidence="1">Cytoplasm</location>
    </subcellularLocation>
</comment>
<comment type="similarity">
    <text evidence="1">Belongs to the aldolase class II family. RhaD subfamily.</text>
</comment>
<reference key="1">
    <citation type="journal article" date="2003" name="Science">
        <title>A genomic view of the human-Bacteroides thetaiotaomicron symbiosis.</title>
        <authorList>
            <person name="Xu J."/>
            <person name="Bjursell M.K."/>
            <person name="Himrod J."/>
            <person name="Deng S."/>
            <person name="Carmichael L.K."/>
            <person name="Chiang H.C."/>
            <person name="Hooper L.V."/>
            <person name="Gordon J.I."/>
        </authorList>
    </citation>
    <scope>NUCLEOTIDE SEQUENCE [LARGE SCALE GENOMIC DNA]</scope>
    <source>
        <strain>ATCC 29148 / DSM 2079 / JCM 5827 / CCUG 10774 / NCTC 10582 / VPI-5482 / E50</strain>
    </source>
</reference>
<keyword id="KW-0963">Cytoplasm</keyword>
<keyword id="KW-0456">Lyase</keyword>
<keyword id="KW-0479">Metal-binding</keyword>
<keyword id="KW-1185">Reference proteome</keyword>
<keyword id="KW-0684">Rhamnose metabolism</keyword>
<keyword id="KW-0862">Zinc</keyword>
<proteinExistence type="inferred from homology"/>
<gene>
    <name evidence="1" type="primary">rhaD</name>
    <name type="ordered locus">BT_3766</name>
</gene>
<organism>
    <name type="scientific">Bacteroides thetaiotaomicron (strain ATCC 29148 / DSM 2079 / JCM 5827 / CCUG 10774 / NCTC 10582 / VPI-5482 / E50)</name>
    <dbReference type="NCBI Taxonomy" id="226186"/>
    <lineage>
        <taxon>Bacteria</taxon>
        <taxon>Pseudomonadati</taxon>
        <taxon>Bacteroidota</taxon>
        <taxon>Bacteroidia</taxon>
        <taxon>Bacteroidales</taxon>
        <taxon>Bacteroidaceae</taxon>
        <taxon>Bacteroides</taxon>
    </lineage>
</organism>
<dbReference type="EC" id="4.1.2.19" evidence="1"/>
<dbReference type="EMBL" id="AE015928">
    <property type="protein sequence ID" value="AAO78871.1"/>
    <property type="molecule type" value="Genomic_DNA"/>
</dbReference>
<dbReference type="RefSeq" id="NP_812677.1">
    <property type="nucleotide sequence ID" value="NC_004663.1"/>
</dbReference>
<dbReference type="RefSeq" id="WP_008766960.1">
    <property type="nucleotide sequence ID" value="NZ_UYXG01000036.1"/>
</dbReference>
<dbReference type="SMR" id="Q8A1A0"/>
<dbReference type="FunCoup" id="Q8A1A0">
    <property type="interactions" value="53"/>
</dbReference>
<dbReference type="STRING" id="226186.BT_3766"/>
<dbReference type="PaxDb" id="226186-BT_3766"/>
<dbReference type="EnsemblBacteria" id="AAO78871">
    <property type="protein sequence ID" value="AAO78871"/>
    <property type="gene ID" value="BT_3766"/>
</dbReference>
<dbReference type="GeneID" id="60924936"/>
<dbReference type="KEGG" id="bth:BT_3766"/>
<dbReference type="PATRIC" id="fig|226186.12.peg.3828"/>
<dbReference type="eggNOG" id="COG0235">
    <property type="taxonomic scope" value="Bacteria"/>
</dbReference>
<dbReference type="HOGENOM" id="CLU_076831_0_0_10"/>
<dbReference type="InParanoid" id="Q8A1A0"/>
<dbReference type="OrthoDB" id="9784634at2"/>
<dbReference type="UniPathway" id="UPA00541">
    <property type="reaction ID" value="UER00603"/>
</dbReference>
<dbReference type="Proteomes" id="UP000001414">
    <property type="component" value="Chromosome"/>
</dbReference>
<dbReference type="GO" id="GO:0005829">
    <property type="term" value="C:cytosol"/>
    <property type="evidence" value="ECO:0000318"/>
    <property type="project" value="GO_Central"/>
</dbReference>
<dbReference type="GO" id="GO:0016832">
    <property type="term" value="F:aldehyde-lyase activity"/>
    <property type="evidence" value="ECO:0000318"/>
    <property type="project" value="GO_Central"/>
</dbReference>
<dbReference type="GO" id="GO:0046872">
    <property type="term" value="F:metal ion binding"/>
    <property type="evidence" value="ECO:0007669"/>
    <property type="project" value="UniProtKB-KW"/>
</dbReference>
<dbReference type="GO" id="GO:0008994">
    <property type="term" value="F:rhamnulose-1-phosphate aldolase activity"/>
    <property type="evidence" value="ECO:0007669"/>
    <property type="project" value="UniProtKB-UniRule"/>
</dbReference>
<dbReference type="GO" id="GO:0019323">
    <property type="term" value="P:pentose catabolic process"/>
    <property type="evidence" value="ECO:0000318"/>
    <property type="project" value="GO_Central"/>
</dbReference>
<dbReference type="GO" id="GO:0019301">
    <property type="term" value="P:rhamnose catabolic process"/>
    <property type="evidence" value="ECO:0007669"/>
    <property type="project" value="UniProtKB-UniRule"/>
</dbReference>
<dbReference type="FunFam" id="3.40.225.10:FF:000014">
    <property type="entry name" value="Rhamnulose-1-phosphate aldolase"/>
    <property type="match status" value="1"/>
</dbReference>
<dbReference type="Gene3D" id="3.40.225.10">
    <property type="entry name" value="Class II aldolase/adducin N-terminal domain"/>
    <property type="match status" value="1"/>
</dbReference>
<dbReference type="HAMAP" id="MF_00770">
    <property type="entry name" value="RhaD"/>
    <property type="match status" value="1"/>
</dbReference>
<dbReference type="InterPro" id="IPR050197">
    <property type="entry name" value="Aldolase_class_II_sugar_metab"/>
</dbReference>
<dbReference type="InterPro" id="IPR001303">
    <property type="entry name" value="Aldolase_II/adducin_N"/>
</dbReference>
<dbReference type="InterPro" id="IPR036409">
    <property type="entry name" value="Aldolase_II/adducin_N_sf"/>
</dbReference>
<dbReference type="InterPro" id="IPR013447">
    <property type="entry name" value="Rhamnulose-1-P_Aldolase"/>
</dbReference>
<dbReference type="NCBIfam" id="NF002963">
    <property type="entry name" value="PRK03634.1"/>
    <property type="match status" value="1"/>
</dbReference>
<dbReference type="PANTHER" id="PTHR22789:SF0">
    <property type="entry name" value="3-OXO-TETRONATE 4-PHOSPHATE DECARBOXYLASE-RELATED"/>
    <property type="match status" value="1"/>
</dbReference>
<dbReference type="PANTHER" id="PTHR22789">
    <property type="entry name" value="FUCULOSE PHOSPHATE ALDOLASE"/>
    <property type="match status" value="1"/>
</dbReference>
<dbReference type="Pfam" id="PF00596">
    <property type="entry name" value="Aldolase_II"/>
    <property type="match status" value="1"/>
</dbReference>
<dbReference type="SMART" id="SM01007">
    <property type="entry name" value="Aldolase_II"/>
    <property type="match status" value="1"/>
</dbReference>
<dbReference type="SUPFAM" id="SSF53639">
    <property type="entry name" value="AraD/HMP-PK domain-like"/>
    <property type="match status" value="1"/>
</dbReference>
<sequence length="269" mass="30248">MKSILENRPALAKEVNKVAEVAGYLWQKGWAERNGGNITVNITEFVDDEIRRMEPISEVKSIGVTLPYLKGCYFYCKGTNKRMRDLARWPMENGSVIRILDDCASYVIIADEAVAPTSELPSHLSVHNDLLSKNSPYKASVHTHPIELIAMTHCEKFLQKDVATNLLWSMIPETKAFCPRGLGIIPYKLPSSVELAEATIKELQDYDVVMWEKHGVFAVDCDAMQAFDQIDVLNKSALIYIAAKNMGFEPDGMSQEQMKEMSVAFNLPK</sequence>